<protein>
    <recommendedName>
        <fullName>Forkhead box protein E3</fullName>
    </recommendedName>
    <alternativeName>
        <fullName>Forkhead-related protein FKHL12</fullName>
    </alternativeName>
    <alternativeName>
        <fullName>Forkhead-related transcription factor 8</fullName>
        <shortName>FREAC-8</shortName>
    </alternativeName>
    <alternativeName>
        <fullName>Hepatocyte nuclear factor 3 forkhead homolog 7</fullName>
        <shortName>HFH-7</shortName>
    </alternativeName>
</protein>
<name>FOXE3_RAT</name>
<feature type="chain" id="PRO_0000433236" description="Forkhead box protein E3">
    <location>
        <begin position="1"/>
        <end position="286"/>
    </location>
</feature>
<feature type="DNA-binding region" description="Fork-head" evidence="3">
    <location>
        <begin position="64"/>
        <end position="158"/>
    </location>
</feature>
<feature type="region of interest" description="Disordered" evidence="4">
    <location>
        <begin position="1"/>
        <end position="62"/>
    </location>
</feature>
<proteinExistence type="evidence at transcript level"/>
<keyword id="KW-0238">DNA-binding</keyword>
<keyword id="KW-0539">Nucleus</keyword>
<keyword id="KW-1185">Reference proteome</keyword>
<keyword id="KW-0804">Transcription</keyword>
<keyword id="KW-0805">Transcription regulation</keyword>
<comment type="function">
    <text evidence="1 2">Transcription factor that controls lens epithelial cell growth through regulation of proliferation, apoptosis and cell cycle (By similarity). During lens development, controls the ratio of the lens fiber cells to the cells of the anterior lens epithelium by regulating the rate of proliferation and differentiation (By similarity). Controls lens vesicle closure and subsequent separation of the lens vesicle from ectoderm (By similarity). Controls the expression of DNAJB1 in a pathway that is crucial for the development of the anterior segment of the eye (By similarity).</text>
</comment>
<comment type="subcellular location">
    <subcellularLocation>
        <location evidence="2">Nucleus</location>
    </subcellularLocation>
</comment>
<reference key="1">
    <citation type="journal article" date="1993" name="Proc. Natl. Acad. Sci. U.S.A.">
        <title>Identification of nine tissue-specific transcription factors of the hepatocyte nuclear factor 3/forkhead DNA-binding-domain family.</title>
        <authorList>
            <person name="Clevidence D.E."/>
            <person name="Overdier D.G."/>
            <person name="Tao W."/>
            <person name="Qian X."/>
            <person name="Pani L."/>
            <person name="Lai E."/>
            <person name="Costa R.H."/>
        </authorList>
    </citation>
    <scope>NUCLEOTIDE SEQUENCE [MRNA]</scope>
    <source>
        <strain>Sprague-Dawley</strain>
    </source>
</reference>
<reference key="2">
    <citation type="journal article" date="2004" name="Nature">
        <title>Genome sequence of the Brown Norway rat yields insights into mammalian evolution.</title>
        <authorList>
            <person name="Gibbs R.A."/>
            <person name="Weinstock G.M."/>
            <person name="Metzker M.L."/>
            <person name="Muzny D.M."/>
            <person name="Sodergren E.J."/>
            <person name="Scherer S."/>
            <person name="Scott G."/>
            <person name="Steffen D."/>
            <person name="Worley K.C."/>
            <person name="Burch P.E."/>
            <person name="Okwuonu G."/>
            <person name="Hines S."/>
            <person name="Lewis L."/>
            <person name="Deramo C."/>
            <person name="Delgado O."/>
            <person name="Dugan-Rocha S."/>
            <person name="Miner G."/>
            <person name="Morgan M."/>
            <person name="Hawes A."/>
            <person name="Gill R."/>
            <person name="Holt R.A."/>
            <person name="Adams M.D."/>
            <person name="Amanatides P.G."/>
            <person name="Baden-Tillson H."/>
            <person name="Barnstead M."/>
            <person name="Chin S."/>
            <person name="Evans C.A."/>
            <person name="Ferriera S."/>
            <person name="Fosler C."/>
            <person name="Glodek A."/>
            <person name="Gu Z."/>
            <person name="Jennings D."/>
            <person name="Kraft C.L."/>
            <person name="Nguyen T."/>
            <person name="Pfannkoch C.M."/>
            <person name="Sitter C."/>
            <person name="Sutton G.G."/>
            <person name="Venter J.C."/>
            <person name="Woodage T."/>
            <person name="Smith D."/>
            <person name="Lee H.-M."/>
            <person name="Gustafson E."/>
            <person name="Cahill P."/>
            <person name="Kana A."/>
            <person name="Doucette-Stamm L."/>
            <person name="Weinstock K."/>
            <person name="Fechtel K."/>
            <person name="Weiss R.B."/>
            <person name="Dunn D.M."/>
            <person name="Green E.D."/>
            <person name="Blakesley R.W."/>
            <person name="Bouffard G.G."/>
            <person name="De Jong P.J."/>
            <person name="Osoegawa K."/>
            <person name="Zhu B."/>
            <person name="Marra M."/>
            <person name="Schein J."/>
            <person name="Bosdet I."/>
            <person name="Fjell C."/>
            <person name="Jones S."/>
            <person name="Krzywinski M."/>
            <person name="Mathewson C."/>
            <person name="Siddiqui A."/>
            <person name="Wye N."/>
            <person name="McPherson J."/>
            <person name="Zhao S."/>
            <person name="Fraser C.M."/>
            <person name="Shetty J."/>
            <person name="Shatsman S."/>
            <person name="Geer K."/>
            <person name="Chen Y."/>
            <person name="Abramzon S."/>
            <person name="Nierman W.C."/>
            <person name="Havlak P.H."/>
            <person name="Chen R."/>
            <person name="Durbin K.J."/>
            <person name="Egan A."/>
            <person name="Ren Y."/>
            <person name="Song X.-Z."/>
            <person name="Li B."/>
            <person name="Liu Y."/>
            <person name="Qin X."/>
            <person name="Cawley S."/>
            <person name="Cooney A.J."/>
            <person name="D'Souza L.M."/>
            <person name="Martin K."/>
            <person name="Wu J.Q."/>
            <person name="Gonzalez-Garay M.L."/>
            <person name="Jackson A.R."/>
            <person name="Kalafus K.J."/>
            <person name="McLeod M.P."/>
            <person name="Milosavljevic A."/>
            <person name="Virk D."/>
            <person name="Volkov A."/>
            <person name="Wheeler D.A."/>
            <person name="Zhang Z."/>
            <person name="Bailey J.A."/>
            <person name="Eichler E.E."/>
            <person name="Tuzun E."/>
            <person name="Birney E."/>
            <person name="Mongin E."/>
            <person name="Ureta-Vidal A."/>
            <person name="Woodwark C."/>
            <person name="Zdobnov E."/>
            <person name="Bork P."/>
            <person name="Suyama M."/>
            <person name="Torrents D."/>
            <person name="Alexandersson M."/>
            <person name="Trask B.J."/>
            <person name="Young J.M."/>
            <person name="Huang H."/>
            <person name="Wang H."/>
            <person name="Xing H."/>
            <person name="Daniels S."/>
            <person name="Gietzen D."/>
            <person name="Schmidt J."/>
            <person name="Stevens K."/>
            <person name="Vitt U."/>
            <person name="Wingrove J."/>
            <person name="Camara F."/>
            <person name="Mar Alba M."/>
            <person name="Abril J.F."/>
            <person name="Guigo R."/>
            <person name="Smit A."/>
            <person name="Dubchak I."/>
            <person name="Rubin E.M."/>
            <person name="Couronne O."/>
            <person name="Poliakov A."/>
            <person name="Huebner N."/>
            <person name="Ganten D."/>
            <person name="Goesele C."/>
            <person name="Hummel O."/>
            <person name="Kreitler T."/>
            <person name="Lee Y.-A."/>
            <person name="Monti J."/>
            <person name="Schulz H."/>
            <person name="Zimdahl H."/>
            <person name="Himmelbauer H."/>
            <person name="Lehrach H."/>
            <person name="Jacob H.J."/>
            <person name="Bromberg S."/>
            <person name="Gullings-Handley J."/>
            <person name="Jensen-Seaman M.I."/>
            <person name="Kwitek A.E."/>
            <person name="Lazar J."/>
            <person name="Pasko D."/>
            <person name="Tonellato P.J."/>
            <person name="Twigger S."/>
            <person name="Ponting C.P."/>
            <person name="Duarte J.M."/>
            <person name="Rice S."/>
            <person name="Goodstadt L."/>
            <person name="Beatson S.A."/>
            <person name="Emes R.D."/>
            <person name="Winter E.E."/>
            <person name="Webber C."/>
            <person name="Brandt P."/>
            <person name="Nyakatura G."/>
            <person name="Adetobi M."/>
            <person name="Chiaromonte F."/>
            <person name="Elnitski L."/>
            <person name="Eswara P."/>
            <person name="Hardison R.C."/>
            <person name="Hou M."/>
            <person name="Kolbe D."/>
            <person name="Makova K."/>
            <person name="Miller W."/>
            <person name="Nekrutenko A."/>
            <person name="Riemer C."/>
            <person name="Schwartz S."/>
            <person name="Taylor J."/>
            <person name="Yang S."/>
            <person name="Zhang Y."/>
            <person name="Lindpaintner K."/>
            <person name="Andrews T.D."/>
            <person name="Caccamo M."/>
            <person name="Clamp M."/>
            <person name="Clarke L."/>
            <person name="Curwen V."/>
            <person name="Durbin R.M."/>
            <person name="Eyras E."/>
            <person name="Searle S.M."/>
            <person name="Cooper G.M."/>
            <person name="Batzoglou S."/>
            <person name="Brudno M."/>
            <person name="Sidow A."/>
            <person name="Stone E.A."/>
            <person name="Payseur B.A."/>
            <person name="Bourque G."/>
            <person name="Lopez-Otin C."/>
            <person name="Puente X.S."/>
            <person name="Chakrabarti K."/>
            <person name="Chatterji S."/>
            <person name="Dewey C."/>
            <person name="Pachter L."/>
            <person name="Bray N."/>
            <person name="Yap V.B."/>
            <person name="Caspi A."/>
            <person name="Tesler G."/>
            <person name="Pevzner P.A."/>
            <person name="Haussler D."/>
            <person name="Roskin K.M."/>
            <person name="Baertsch R."/>
            <person name="Clawson H."/>
            <person name="Furey T.S."/>
            <person name="Hinrichs A.S."/>
            <person name="Karolchik D."/>
            <person name="Kent W.J."/>
            <person name="Rosenbloom K.R."/>
            <person name="Trumbower H."/>
            <person name="Weirauch M."/>
            <person name="Cooper D.N."/>
            <person name="Stenson P.D."/>
            <person name="Ma B."/>
            <person name="Brent M."/>
            <person name="Arumugam M."/>
            <person name="Shteynberg D."/>
            <person name="Copley R.R."/>
            <person name="Taylor M.S."/>
            <person name="Riethman H."/>
            <person name="Mudunuri U."/>
            <person name="Peterson J."/>
            <person name="Guyer M."/>
            <person name="Felsenfeld A."/>
            <person name="Old S."/>
            <person name="Mockrin S."/>
            <person name="Collins F.S."/>
        </authorList>
    </citation>
    <scope>NUCLEOTIDE SEQUENCE [LARGE SCALE GENOMIC DNA]</scope>
    <source>
        <strain>Brown Norway</strain>
    </source>
</reference>
<reference key="3">
    <citation type="submission" date="2005-09" db="EMBL/GenBank/DDBJ databases">
        <authorList>
            <person name="Mural R.J."/>
            <person name="Adams M.D."/>
            <person name="Myers E.W."/>
            <person name="Smith H.O."/>
            <person name="Venter J.C."/>
        </authorList>
    </citation>
    <scope>NUCLEOTIDE SEQUENCE [LARGE SCALE GENOMIC DNA]</scope>
    <source>
        <strain>Brown Norway</strain>
    </source>
</reference>
<dbReference type="EMBL" id="L13207">
    <property type="protein sequence ID" value="AAA41323.1"/>
    <property type="molecule type" value="mRNA"/>
</dbReference>
<dbReference type="EMBL" id="AABR06039461">
    <property type="status" value="NOT_ANNOTATED_CDS"/>
    <property type="molecule type" value="Genomic_DNA"/>
</dbReference>
<dbReference type="EMBL" id="CH474008">
    <property type="protein sequence ID" value="EDL90326.1"/>
    <property type="molecule type" value="Genomic_DNA"/>
</dbReference>
<dbReference type="PIR" id="I60921">
    <property type="entry name" value="I60921"/>
</dbReference>
<dbReference type="RefSeq" id="NP_599166.1">
    <property type="nucleotide sequence ID" value="NM_134339.2"/>
</dbReference>
<dbReference type="SMR" id="Q63250"/>
<dbReference type="STRING" id="10116.ENSRNOP00000010208"/>
<dbReference type="PhosphoSitePlus" id="Q63250"/>
<dbReference type="PaxDb" id="10116-ENSRNOP00000010208"/>
<dbReference type="Ensembl" id="ENSRNOT00000010208.3">
    <property type="protein sequence ID" value="ENSRNOP00000010208.1"/>
    <property type="gene ID" value="ENSRNOG00000007770.3"/>
</dbReference>
<dbReference type="GeneID" id="171302"/>
<dbReference type="KEGG" id="rno:171302"/>
<dbReference type="UCSC" id="RGD:621727">
    <property type="organism name" value="rat"/>
</dbReference>
<dbReference type="AGR" id="RGD:621727"/>
<dbReference type="CTD" id="2301"/>
<dbReference type="RGD" id="621727">
    <property type="gene designation" value="Foxe3"/>
</dbReference>
<dbReference type="eggNOG" id="KOG2294">
    <property type="taxonomic scope" value="Eukaryota"/>
</dbReference>
<dbReference type="GeneTree" id="ENSGT00940000163987"/>
<dbReference type="InParanoid" id="Q63250"/>
<dbReference type="OMA" id="SYNNTYM"/>
<dbReference type="OrthoDB" id="90041at9989"/>
<dbReference type="TreeFam" id="TF316127"/>
<dbReference type="PRO" id="PR:Q63250"/>
<dbReference type="Proteomes" id="UP000002494">
    <property type="component" value="Chromosome 5"/>
</dbReference>
<dbReference type="Proteomes" id="UP000234681">
    <property type="component" value="Chromosome 5"/>
</dbReference>
<dbReference type="GO" id="GO:0005634">
    <property type="term" value="C:nucleus"/>
    <property type="evidence" value="ECO:0000250"/>
    <property type="project" value="UniProtKB"/>
</dbReference>
<dbReference type="GO" id="GO:0005667">
    <property type="term" value="C:transcription regulator complex"/>
    <property type="evidence" value="ECO:0000266"/>
    <property type="project" value="RGD"/>
</dbReference>
<dbReference type="GO" id="GO:0003677">
    <property type="term" value="F:DNA binding"/>
    <property type="evidence" value="ECO:0000250"/>
    <property type="project" value="UniProtKB"/>
</dbReference>
<dbReference type="GO" id="GO:0003700">
    <property type="term" value="F:DNA-binding transcription factor activity"/>
    <property type="evidence" value="ECO:0000250"/>
    <property type="project" value="UniProtKB"/>
</dbReference>
<dbReference type="GO" id="GO:0000981">
    <property type="term" value="F:DNA-binding transcription factor activity, RNA polymerase II-specific"/>
    <property type="evidence" value="ECO:0000318"/>
    <property type="project" value="GO_Central"/>
</dbReference>
<dbReference type="GO" id="GO:0000978">
    <property type="term" value="F:RNA polymerase II cis-regulatory region sequence-specific DNA binding"/>
    <property type="evidence" value="ECO:0000318"/>
    <property type="project" value="GO_Central"/>
</dbReference>
<dbReference type="GO" id="GO:0043565">
    <property type="term" value="F:sequence-specific DNA binding"/>
    <property type="evidence" value="ECO:0000250"/>
    <property type="project" value="UniProtKB"/>
</dbReference>
<dbReference type="GO" id="GO:0009653">
    <property type="term" value="P:anatomical structure morphogenesis"/>
    <property type="evidence" value="ECO:0000318"/>
    <property type="project" value="GO_Central"/>
</dbReference>
<dbReference type="GO" id="GO:0043010">
    <property type="term" value="P:camera-type eye development"/>
    <property type="evidence" value="ECO:0000266"/>
    <property type="project" value="RGD"/>
</dbReference>
<dbReference type="GO" id="GO:0048468">
    <property type="term" value="P:cell development"/>
    <property type="evidence" value="ECO:0000266"/>
    <property type="project" value="RGD"/>
</dbReference>
<dbReference type="GO" id="GO:0030154">
    <property type="term" value="P:cell differentiation"/>
    <property type="evidence" value="ECO:0000318"/>
    <property type="project" value="GO_Central"/>
</dbReference>
<dbReference type="GO" id="GO:0061073">
    <property type="term" value="P:ciliary body morphogenesis"/>
    <property type="evidence" value="ECO:0000250"/>
    <property type="project" value="UniProtKB"/>
</dbReference>
<dbReference type="GO" id="GO:0061303">
    <property type="term" value="P:cornea development in camera-type eye"/>
    <property type="evidence" value="ECO:0000250"/>
    <property type="project" value="UniProtKB"/>
</dbReference>
<dbReference type="GO" id="GO:0050673">
    <property type="term" value="P:epithelial cell proliferation"/>
    <property type="evidence" value="ECO:0000266"/>
    <property type="project" value="RGD"/>
</dbReference>
<dbReference type="GO" id="GO:0001654">
    <property type="term" value="P:eye development"/>
    <property type="evidence" value="ECO:0000250"/>
    <property type="project" value="UniProtKB"/>
</dbReference>
<dbReference type="GO" id="GO:0061072">
    <property type="term" value="P:iris morphogenesis"/>
    <property type="evidence" value="ECO:0000250"/>
    <property type="project" value="UniProtKB"/>
</dbReference>
<dbReference type="GO" id="GO:0002088">
    <property type="term" value="P:lens development in camera-type eye"/>
    <property type="evidence" value="ECO:0000250"/>
    <property type="project" value="UniProtKB"/>
</dbReference>
<dbReference type="GO" id="GO:0042789">
    <property type="term" value="P:mRNA transcription by RNA polymerase II"/>
    <property type="evidence" value="ECO:0000250"/>
    <property type="project" value="UniProtKB"/>
</dbReference>
<dbReference type="GO" id="GO:0043066">
    <property type="term" value="P:negative regulation of apoptotic process"/>
    <property type="evidence" value="ECO:0000250"/>
    <property type="project" value="UniProtKB"/>
</dbReference>
<dbReference type="GO" id="GO:1902747">
    <property type="term" value="P:negative regulation of lens fiber cell differentiation"/>
    <property type="evidence" value="ECO:0000250"/>
    <property type="project" value="UniProtKB"/>
</dbReference>
<dbReference type="GO" id="GO:0050679">
    <property type="term" value="P:positive regulation of epithelial cell proliferation"/>
    <property type="evidence" value="ECO:0000266"/>
    <property type="project" value="RGD"/>
</dbReference>
<dbReference type="GO" id="GO:2001111">
    <property type="term" value="P:positive regulation of lens epithelial cell proliferation"/>
    <property type="evidence" value="ECO:0000250"/>
    <property type="project" value="UniProtKB"/>
</dbReference>
<dbReference type="GO" id="GO:0051726">
    <property type="term" value="P:regulation of cell cycle"/>
    <property type="evidence" value="ECO:0000250"/>
    <property type="project" value="UniProtKB"/>
</dbReference>
<dbReference type="GO" id="GO:0006357">
    <property type="term" value="P:regulation of transcription by RNA polymerase II"/>
    <property type="evidence" value="ECO:0000318"/>
    <property type="project" value="GO_Central"/>
</dbReference>
<dbReference type="GO" id="GO:0002930">
    <property type="term" value="P:trabecular meshwork development"/>
    <property type="evidence" value="ECO:0000250"/>
    <property type="project" value="UniProtKB"/>
</dbReference>
<dbReference type="GO" id="GO:0006366">
    <property type="term" value="P:transcription by RNA polymerase II"/>
    <property type="evidence" value="ECO:0000266"/>
    <property type="project" value="RGD"/>
</dbReference>
<dbReference type="CDD" id="cd20019">
    <property type="entry name" value="FH_FOXE"/>
    <property type="match status" value="1"/>
</dbReference>
<dbReference type="FunFam" id="1.10.10.10:FF:000201">
    <property type="entry name" value="Forkhead box E1"/>
    <property type="match status" value="1"/>
</dbReference>
<dbReference type="Gene3D" id="1.10.10.10">
    <property type="entry name" value="Winged helix-like DNA-binding domain superfamily/Winged helix DNA-binding domain"/>
    <property type="match status" value="1"/>
</dbReference>
<dbReference type="InterPro" id="IPR001766">
    <property type="entry name" value="Fork_head_dom"/>
</dbReference>
<dbReference type="InterPro" id="IPR050211">
    <property type="entry name" value="FOX_domain-containing"/>
</dbReference>
<dbReference type="InterPro" id="IPR018122">
    <property type="entry name" value="TF_fork_head_CS_1"/>
</dbReference>
<dbReference type="InterPro" id="IPR030456">
    <property type="entry name" value="TF_fork_head_CS_2"/>
</dbReference>
<dbReference type="InterPro" id="IPR036388">
    <property type="entry name" value="WH-like_DNA-bd_sf"/>
</dbReference>
<dbReference type="InterPro" id="IPR036390">
    <property type="entry name" value="WH_DNA-bd_sf"/>
</dbReference>
<dbReference type="PANTHER" id="PTHR11829">
    <property type="entry name" value="FORKHEAD BOX PROTEIN"/>
    <property type="match status" value="1"/>
</dbReference>
<dbReference type="PANTHER" id="PTHR11829:SF156">
    <property type="entry name" value="FORKHEAD BOX PROTEIN E3"/>
    <property type="match status" value="1"/>
</dbReference>
<dbReference type="Pfam" id="PF00250">
    <property type="entry name" value="Forkhead"/>
    <property type="match status" value="1"/>
</dbReference>
<dbReference type="PRINTS" id="PR00053">
    <property type="entry name" value="FORKHEAD"/>
</dbReference>
<dbReference type="SMART" id="SM00339">
    <property type="entry name" value="FH"/>
    <property type="match status" value="1"/>
</dbReference>
<dbReference type="SUPFAM" id="SSF46785">
    <property type="entry name" value="Winged helix' DNA-binding domain"/>
    <property type="match status" value="1"/>
</dbReference>
<dbReference type="PROSITE" id="PS00657">
    <property type="entry name" value="FORK_HEAD_1"/>
    <property type="match status" value="1"/>
</dbReference>
<dbReference type="PROSITE" id="PS00658">
    <property type="entry name" value="FORK_HEAD_2"/>
    <property type="match status" value="1"/>
</dbReference>
<dbReference type="PROSITE" id="PS50039">
    <property type="entry name" value="FORK_HEAD_3"/>
    <property type="match status" value="1"/>
</dbReference>
<sequence length="286" mass="30469">MDAHVAFSGFPTLPSVSPSGPQPPSLAGDEPGREPEEVVGGGDSEPPAAPGPGRRRRRPLQRGKPPYSYIALIAMALAHAPGRRLTLAAIYRFITERFAFYRDSPRKWQNSIRHNLTLNDCFVKVPREPGNPGKGNYWTLDPAAADMFDNGSFLRRRKRFKRTELPAPPPPPFPYAPFPPAPAPAPAPPARLFRLDSLLGLQTEPPGPLAPEPPCCAAPDASFPPCAAAASPPLYSPAPERLGLPAPLPAEPLLALAGSAGALGPLGAGEAYLRQPGFPPGLERYL</sequence>
<gene>
    <name type="primary">Foxe3</name>
    <name type="synonym">Fkhl12</name>
    <name type="synonym">Freac8</name>
    <name type="synonym">Hfh7</name>
</gene>
<organism>
    <name type="scientific">Rattus norvegicus</name>
    <name type="common">Rat</name>
    <dbReference type="NCBI Taxonomy" id="10116"/>
    <lineage>
        <taxon>Eukaryota</taxon>
        <taxon>Metazoa</taxon>
        <taxon>Chordata</taxon>
        <taxon>Craniata</taxon>
        <taxon>Vertebrata</taxon>
        <taxon>Euteleostomi</taxon>
        <taxon>Mammalia</taxon>
        <taxon>Eutheria</taxon>
        <taxon>Euarchontoglires</taxon>
        <taxon>Glires</taxon>
        <taxon>Rodentia</taxon>
        <taxon>Myomorpha</taxon>
        <taxon>Muroidea</taxon>
        <taxon>Muridae</taxon>
        <taxon>Murinae</taxon>
        <taxon>Rattus</taxon>
    </lineage>
</organism>
<accession>Q63250</accession>
<accession>G3V6Y8</accession>
<evidence type="ECO:0000250" key="1">
    <source>
        <dbReference type="UniProtKB" id="Q13461"/>
    </source>
</evidence>
<evidence type="ECO:0000250" key="2">
    <source>
        <dbReference type="UniProtKB" id="Q9QY14"/>
    </source>
</evidence>
<evidence type="ECO:0000255" key="3">
    <source>
        <dbReference type="PROSITE-ProRule" id="PRU00089"/>
    </source>
</evidence>
<evidence type="ECO:0000256" key="4">
    <source>
        <dbReference type="SAM" id="MobiDB-lite"/>
    </source>
</evidence>